<reference key="1">
    <citation type="submission" date="2007-11" db="EMBL/GenBank/DDBJ databases">
        <authorList>
            <consortium name="The Salmonella enterica serovar Arizonae Genome Sequencing Project"/>
            <person name="McClelland M."/>
            <person name="Sanderson E.K."/>
            <person name="Porwollik S."/>
            <person name="Spieth J."/>
            <person name="Clifton W.S."/>
            <person name="Fulton R."/>
            <person name="Chunyan W."/>
            <person name="Wollam A."/>
            <person name="Shah N."/>
            <person name="Pepin K."/>
            <person name="Bhonagiri V."/>
            <person name="Nash W."/>
            <person name="Johnson M."/>
            <person name="Thiruvilangam P."/>
            <person name="Wilson R."/>
        </authorList>
    </citation>
    <scope>NUCLEOTIDE SEQUENCE [LARGE SCALE GENOMIC DNA]</scope>
    <source>
        <strain>ATCC BAA-731 / CDC346-86 / RSK2980</strain>
    </source>
</reference>
<name>CBIN_SALAR</name>
<dbReference type="EMBL" id="CP000880">
    <property type="protein sequence ID" value="ABX20785.1"/>
    <property type="molecule type" value="Genomic_DNA"/>
</dbReference>
<dbReference type="STRING" id="41514.SARI_00866"/>
<dbReference type="KEGG" id="ses:SARI_00866"/>
<dbReference type="HOGENOM" id="CLU_136197_2_0_6"/>
<dbReference type="UniPathway" id="UPA00148"/>
<dbReference type="Proteomes" id="UP000002084">
    <property type="component" value="Chromosome"/>
</dbReference>
<dbReference type="GO" id="GO:0005886">
    <property type="term" value="C:plasma membrane"/>
    <property type="evidence" value="ECO:0007669"/>
    <property type="project" value="UniProtKB-SubCell"/>
</dbReference>
<dbReference type="GO" id="GO:0015087">
    <property type="term" value="F:cobalt ion transmembrane transporter activity"/>
    <property type="evidence" value="ECO:0007669"/>
    <property type="project" value="UniProtKB-UniRule"/>
</dbReference>
<dbReference type="GO" id="GO:0009236">
    <property type="term" value="P:cobalamin biosynthetic process"/>
    <property type="evidence" value="ECO:0007669"/>
    <property type="project" value="UniProtKB-UniRule"/>
</dbReference>
<dbReference type="HAMAP" id="MF_00330">
    <property type="entry name" value="CbiN"/>
    <property type="match status" value="1"/>
</dbReference>
<dbReference type="InterPro" id="IPR003705">
    <property type="entry name" value="CbiN"/>
</dbReference>
<dbReference type="NCBIfam" id="TIGR01165">
    <property type="entry name" value="cbiN"/>
    <property type="match status" value="1"/>
</dbReference>
<dbReference type="NCBIfam" id="NF002780">
    <property type="entry name" value="PRK02898.1"/>
    <property type="match status" value="1"/>
</dbReference>
<dbReference type="PANTHER" id="PTHR38662">
    <property type="entry name" value="COBALT TRANSPORT PROTEIN CBIN"/>
    <property type="match status" value="1"/>
</dbReference>
<dbReference type="PANTHER" id="PTHR38662:SF1">
    <property type="entry name" value="COBALT TRANSPORT PROTEIN CBIN"/>
    <property type="match status" value="1"/>
</dbReference>
<dbReference type="Pfam" id="PF02553">
    <property type="entry name" value="CbiN"/>
    <property type="match status" value="1"/>
</dbReference>
<proteinExistence type="inferred from homology"/>
<sequence>MKKTLMLLAMVVALVILPFFINHGGEYGGSDGEAESQIQAIAPHYKPWFQPLYEPASGEIESLLFTLQGSLGAAVIFYILGYCKGKQRRDDRA</sequence>
<comment type="function">
    <text evidence="1">Part of the energy-coupling factor (ECF) transporter complex CbiMNOQ involved in cobalt import.</text>
</comment>
<comment type="pathway">
    <text evidence="1">Cofactor biosynthesis; adenosylcobalamin biosynthesis.</text>
</comment>
<comment type="subunit">
    <text evidence="1">Forms an energy-coupling factor (ECF) transporter complex composed of an ATP-binding protein (A component, CbiO), a transmembrane protein (T component, CbiQ) and 2 possible substrate-capture proteins (S components, CbiM and CbiN) of unknown stoichimetry.</text>
</comment>
<comment type="subcellular location">
    <subcellularLocation>
        <location evidence="1">Cell inner membrane</location>
        <topology evidence="1">Multi-pass membrane protein</topology>
    </subcellularLocation>
</comment>
<comment type="similarity">
    <text evidence="1">Belongs to the CbiN family.</text>
</comment>
<organism>
    <name type="scientific">Salmonella arizonae (strain ATCC BAA-731 / CDC346-86 / RSK2980)</name>
    <dbReference type="NCBI Taxonomy" id="41514"/>
    <lineage>
        <taxon>Bacteria</taxon>
        <taxon>Pseudomonadati</taxon>
        <taxon>Pseudomonadota</taxon>
        <taxon>Gammaproteobacteria</taxon>
        <taxon>Enterobacterales</taxon>
        <taxon>Enterobacteriaceae</taxon>
        <taxon>Salmonella</taxon>
    </lineage>
</organism>
<keyword id="KW-0997">Cell inner membrane</keyword>
<keyword id="KW-1003">Cell membrane</keyword>
<keyword id="KW-0169">Cobalamin biosynthesis</keyword>
<keyword id="KW-0170">Cobalt</keyword>
<keyword id="KW-0171">Cobalt transport</keyword>
<keyword id="KW-0406">Ion transport</keyword>
<keyword id="KW-0472">Membrane</keyword>
<keyword id="KW-1185">Reference proteome</keyword>
<keyword id="KW-0812">Transmembrane</keyword>
<keyword id="KW-1133">Transmembrane helix</keyword>
<keyword id="KW-0813">Transport</keyword>
<evidence type="ECO:0000255" key="1">
    <source>
        <dbReference type="HAMAP-Rule" id="MF_00330"/>
    </source>
</evidence>
<feature type="chain" id="PRO_1000079202" description="Cobalt transport protein CbiN">
    <location>
        <begin position="1"/>
        <end position="93"/>
    </location>
</feature>
<feature type="transmembrane region" description="Helical" evidence="1">
    <location>
        <begin position="5"/>
        <end position="25"/>
    </location>
</feature>
<feature type="transmembrane region" description="Helical" evidence="1">
    <location>
        <begin position="63"/>
        <end position="83"/>
    </location>
</feature>
<protein>
    <recommendedName>
        <fullName evidence="1">Cobalt transport protein CbiN</fullName>
    </recommendedName>
    <alternativeName>
        <fullName evidence="1">Energy-coupling factor transporter probable substrate-capture protein CbiN</fullName>
        <shortName evidence="1">ECF transporter S component CbiN</shortName>
    </alternativeName>
</protein>
<gene>
    <name evidence="1" type="primary">cbiN</name>
    <name type="ordered locus">SARI_00866</name>
</gene>
<accession>A9MLS2</accession>